<proteinExistence type="evidence at protein level"/>
<dbReference type="EMBL" id="X81889">
    <property type="protein sequence ID" value="CAA57478.1"/>
    <property type="status" value="ALT_SEQ"/>
    <property type="molecule type" value="mRNA"/>
</dbReference>
<dbReference type="EMBL" id="AC005042">
    <property type="status" value="NOT_ANNOTATED_CDS"/>
    <property type="molecule type" value="Genomic_DNA"/>
</dbReference>
<dbReference type="EMBL" id="AC008070">
    <property type="status" value="NOT_ANNOTATED_CDS"/>
    <property type="molecule type" value="Genomic_DNA"/>
</dbReference>
<dbReference type="EMBL" id="BC050308">
    <property type="protein sequence ID" value="AAH50308.1"/>
    <property type="molecule type" value="mRNA"/>
</dbReference>
<dbReference type="CCDS" id="CCDS33305.1">
    <molecule id="Q99569-1"/>
</dbReference>
<dbReference type="CCDS" id="CCDS33306.1">
    <molecule id="Q99569-2"/>
</dbReference>
<dbReference type="RefSeq" id="NP_001005476.1">
    <molecule id="Q99569-2"/>
    <property type="nucleotide sequence ID" value="NM_001005476.4"/>
</dbReference>
<dbReference type="RefSeq" id="NP_001291898.1">
    <property type="nucleotide sequence ID" value="NM_001304969.1"/>
</dbReference>
<dbReference type="RefSeq" id="NP_001291899.1">
    <property type="nucleotide sequence ID" value="NM_001304970.1"/>
</dbReference>
<dbReference type="RefSeq" id="NP_001364147.1">
    <molecule id="Q99569-1"/>
    <property type="nucleotide sequence ID" value="NM_001377218.1"/>
</dbReference>
<dbReference type="RefSeq" id="NP_001364154.1">
    <molecule id="Q99569-2"/>
    <property type="nucleotide sequence ID" value="NM_001377225.1"/>
</dbReference>
<dbReference type="RefSeq" id="NP_003619.2">
    <molecule id="Q99569-1"/>
    <property type="nucleotide sequence ID" value="NM_003628.6"/>
</dbReference>
<dbReference type="RefSeq" id="XP_011510318.1">
    <property type="nucleotide sequence ID" value="XM_011512016.1"/>
</dbReference>
<dbReference type="SMR" id="Q99569"/>
<dbReference type="BioGRID" id="114074">
    <property type="interactions" value="169"/>
</dbReference>
<dbReference type="FunCoup" id="Q99569">
    <property type="interactions" value="1481"/>
</dbReference>
<dbReference type="IntAct" id="Q99569">
    <property type="interactions" value="96"/>
</dbReference>
<dbReference type="MINT" id="Q99569"/>
<dbReference type="STRING" id="9606.ENSP00000374409"/>
<dbReference type="GlyCosmos" id="Q99569">
    <property type="glycosylation" value="1 site, 1 glycan"/>
</dbReference>
<dbReference type="GlyGen" id="Q99569">
    <property type="glycosylation" value="3 sites, 1 O-linked glycan (2 sites)"/>
</dbReference>
<dbReference type="iPTMnet" id="Q99569"/>
<dbReference type="PhosphoSitePlus" id="Q99569"/>
<dbReference type="SwissPalm" id="Q99569"/>
<dbReference type="BioMuta" id="PKP4"/>
<dbReference type="DMDM" id="313104155"/>
<dbReference type="jPOST" id="Q99569"/>
<dbReference type="MassIVE" id="Q99569"/>
<dbReference type="PaxDb" id="9606-ENSP00000374409"/>
<dbReference type="PeptideAtlas" id="Q99569"/>
<dbReference type="ProteomicsDB" id="78328">
    <molecule id="Q99569-1"/>
</dbReference>
<dbReference type="ProteomicsDB" id="78329">
    <molecule id="Q99569-2"/>
</dbReference>
<dbReference type="Antibodypedia" id="33712">
    <property type="antibodies" value="179 antibodies from 29 providers"/>
</dbReference>
<dbReference type="DNASU" id="8502"/>
<dbReference type="Ensembl" id="ENST00000389757.7">
    <molecule id="Q99569-2"/>
    <property type="protein sequence ID" value="ENSP00000374407.3"/>
    <property type="gene ID" value="ENSG00000144283.23"/>
</dbReference>
<dbReference type="Ensembl" id="ENST00000389759.8">
    <molecule id="Q99569-1"/>
    <property type="protein sequence ID" value="ENSP00000374409.3"/>
    <property type="gene ID" value="ENSG00000144283.23"/>
</dbReference>
<dbReference type="GeneID" id="8502"/>
<dbReference type="KEGG" id="hsa:8502"/>
<dbReference type="MANE-Select" id="ENST00000389759.8">
    <property type="protein sequence ID" value="ENSP00000374409.3"/>
    <property type="RefSeq nucleotide sequence ID" value="NM_003628.6"/>
    <property type="RefSeq protein sequence ID" value="NP_003619.2"/>
</dbReference>
<dbReference type="UCSC" id="uc002tzv.4">
    <molecule id="Q99569-1"/>
    <property type="organism name" value="human"/>
</dbReference>
<dbReference type="AGR" id="HGNC:9026"/>
<dbReference type="CTD" id="8502"/>
<dbReference type="DisGeNET" id="8502"/>
<dbReference type="GeneCards" id="PKP4"/>
<dbReference type="HGNC" id="HGNC:9026">
    <property type="gene designation" value="PKP4"/>
</dbReference>
<dbReference type="HPA" id="ENSG00000144283">
    <property type="expression patterns" value="Tissue enriched (brain)"/>
</dbReference>
<dbReference type="MalaCards" id="PKP4"/>
<dbReference type="MIM" id="604276">
    <property type="type" value="gene"/>
</dbReference>
<dbReference type="neXtProt" id="NX_Q99569"/>
<dbReference type="OpenTargets" id="ENSG00000144283"/>
<dbReference type="PharmGKB" id="PA33359"/>
<dbReference type="VEuPathDB" id="HostDB:ENSG00000144283"/>
<dbReference type="eggNOG" id="KOG1048">
    <property type="taxonomic scope" value="Eukaryota"/>
</dbReference>
<dbReference type="GeneTree" id="ENSGT00940000155773"/>
<dbReference type="HOGENOM" id="CLU_007897_0_0_1"/>
<dbReference type="InParanoid" id="Q99569"/>
<dbReference type="OMA" id="EPRSEYN"/>
<dbReference type="OrthoDB" id="3245100at2759"/>
<dbReference type="PAN-GO" id="Q99569">
    <property type="GO annotations" value="7 GO annotations based on evolutionary models"/>
</dbReference>
<dbReference type="PhylomeDB" id="Q99569"/>
<dbReference type="TreeFam" id="TF321877"/>
<dbReference type="PathwayCommons" id="Q99569"/>
<dbReference type="Reactome" id="R-HSA-6805567">
    <property type="pathway name" value="Keratinization"/>
</dbReference>
<dbReference type="Reactome" id="R-HSA-6809371">
    <property type="pathway name" value="Formation of the cornified envelope"/>
</dbReference>
<dbReference type="Reactome" id="R-HSA-9696264">
    <property type="pathway name" value="RND3 GTPase cycle"/>
</dbReference>
<dbReference type="Reactome" id="R-HSA-9696270">
    <property type="pathway name" value="RND2 GTPase cycle"/>
</dbReference>
<dbReference type="Reactome" id="R-HSA-9696273">
    <property type="pathway name" value="RND1 GTPase cycle"/>
</dbReference>
<dbReference type="SignaLink" id="Q99569"/>
<dbReference type="BioGRID-ORCS" id="8502">
    <property type="hits" value="17 hits in 1150 CRISPR screens"/>
</dbReference>
<dbReference type="CD-CODE" id="8C2F96ED">
    <property type="entry name" value="Centrosome"/>
</dbReference>
<dbReference type="CD-CODE" id="FB4E32DD">
    <property type="entry name" value="Presynaptic clusters and postsynaptic densities"/>
</dbReference>
<dbReference type="ChiTaRS" id="PKP4">
    <property type="organism name" value="human"/>
</dbReference>
<dbReference type="GeneWiki" id="PKP4"/>
<dbReference type="GenomeRNAi" id="8502"/>
<dbReference type="Pharos" id="Q99569">
    <property type="development level" value="Tbio"/>
</dbReference>
<dbReference type="PRO" id="PR:Q99569"/>
<dbReference type="Proteomes" id="UP000005640">
    <property type="component" value="Chromosome 2"/>
</dbReference>
<dbReference type="RNAct" id="Q99569">
    <property type="molecule type" value="protein"/>
</dbReference>
<dbReference type="Bgee" id="ENSG00000144283">
    <property type="expression patterns" value="Expressed in C1 segment of cervical spinal cord and 193 other cell types or tissues"/>
</dbReference>
<dbReference type="ExpressionAtlas" id="Q99569">
    <property type="expression patterns" value="baseline and differential"/>
</dbReference>
<dbReference type="GO" id="GO:0005912">
    <property type="term" value="C:adherens junction"/>
    <property type="evidence" value="ECO:0000318"/>
    <property type="project" value="GO_Central"/>
</dbReference>
<dbReference type="GO" id="GO:0030054">
    <property type="term" value="C:cell junction"/>
    <property type="evidence" value="ECO:0000314"/>
    <property type="project" value="HPA"/>
</dbReference>
<dbReference type="GO" id="GO:0005911">
    <property type="term" value="C:cell-cell junction"/>
    <property type="evidence" value="ECO:0000314"/>
    <property type="project" value="UniProtKB"/>
</dbReference>
<dbReference type="GO" id="GO:0001533">
    <property type="term" value="C:cornified envelope"/>
    <property type="evidence" value="ECO:0000304"/>
    <property type="project" value="Reactome"/>
</dbReference>
<dbReference type="GO" id="GO:0005737">
    <property type="term" value="C:cytoplasm"/>
    <property type="evidence" value="ECO:0000314"/>
    <property type="project" value="UniProtKB"/>
</dbReference>
<dbReference type="GO" id="GO:0009898">
    <property type="term" value="C:cytoplasmic side of plasma membrane"/>
    <property type="evidence" value="ECO:0000314"/>
    <property type="project" value="UniProtKB"/>
</dbReference>
<dbReference type="GO" id="GO:0005856">
    <property type="term" value="C:cytoskeleton"/>
    <property type="evidence" value="ECO:0000314"/>
    <property type="project" value="UniProtKB"/>
</dbReference>
<dbReference type="GO" id="GO:0030057">
    <property type="term" value="C:desmosome"/>
    <property type="evidence" value="ECO:0000314"/>
    <property type="project" value="UniProtKB"/>
</dbReference>
<dbReference type="GO" id="GO:0030496">
    <property type="term" value="C:midbody"/>
    <property type="evidence" value="ECO:0000314"/>
    <property type="project" value="UniProtKB"/>
</dbReference>
<dbReference type="GO" id="GO:0072686">
    <property type="term" value="C:mitotic spindle"/>
    <property type="evidence" value="ECO:0000314"/>
    <property type="project" value="UniProtKB"/>
</dbReference>
<dbReference type="GO" id="GO:0005634">
    <property type="term" value="C:nucleus"/>
    <property type="evidence" value="ECO:0000318"/>
    <property type="project" value="GO_Central"/>
</dbReference>
<dbReference type="GO" id="GO:0048471">
    <property type="term" value="C:perinuclear region of cytoplasm"/>
    <property type="evidence" value="ECO:0000314"/>
    <property type="project" value="UniProtKB"/>
</dbReference>
<dbReference type="GO" id="GO:0005886">
    <property type="term" value="C:plasma membrane"/>
    <property type="evidence" value="ECO:0000314"/>
    <property type="project" value="HPA"/>
</dbReference>
<dbReference type="GO" id="GO:0014069">
    <property type="term" value="C:postsynaptic density"/>
    <property type="evidence" value="ECO:0007669"/>
    <property type="project" value="Ensembl"/>
</dbReference>
<dbReference type="GO" id="GO:0051233">
    <property type="term" value="C:spindle midzone"/>
    <property type="evidence" value="ECO:0000314"/>
    <property type="project" value="UniProtKB"/>
</dbReference>
<dbReference type="GO" id="GO:0000922">
    <property type="term" value="C:spindle pole"/>
    <property type="evidence" value="ECO:0000314"/>
    <property type="project" value="UniProtKB"/>
</dbReference>
<dbReference type="GO" id="GO:0045296">
    <property type="term" value="F:cadherin binding"/>
    <property type="evidence" value="ECO:0000318"/>
    <property type="project" value="GO_Central"/>
</dbReference>
<dbReference type="GO" id="GO:0098609">
    <property type="term" value="P:cell-cell adhesion"/>
    <property type="evidence" value="ECO:0000318"/>
    <property type="project" value="GO_Central"/>
</dbReference>
<dbReference type="GO" id="GO:0007043">
    <property type="term" value="P:cell-cell junction assembly"/>
    <property type="evidence" value="ECO:0000250"/>
    <property type="project" value="UniProtKB"/>
</dbReference>
<dbReference type="GO" id="GO:0007267">
    <property type="term" value="P:cell-cell signaling"/>
    <property type="evidence" value="ECO:0000303"/>
    <property type="project" value="UniProtKB"/>
</dbReference>
<dbReference type="GO" id="GO:0032467">
    <property type="term" value="P:positive regulation of cytokinesis"/>
    <property type="evidence" value="ECO:0000315"/>
    <property type="project" value="UniProtKB"/>
</dbReference>
<dbReference type="GO" id="GO:0030155">
    <property type="term" value="P:regulation of cell adhesion"/>
    <property type="evidence" value="ECO:0000303"/>
    <property type="project" value="UniProtKB"/>
</dbReference>
<dbReference type="GO" id="GO:0035023">
    <property type="term" value="P:regulation of Rho protein signal transduction"/>
    <property type="evidence" value="ECO:0000314"/>
    <property type="project" value="UniProtKB"/>
</dbReference>
<dbReference type="FunFam" id="1.25.10.10:FF:000008">
    <property type="entry name" value="plakophilin-4 isoform X1"/>
    <property type="match status" value="1"/>
</dbReference>
<dbReference type="Gene3D" id="1.25.10.10">
    <property type="entry name" value="Leucine-rich Repeat Variant"/>
    <property type="match status" value="1"/>
</dbReference>
<dbReference type="InterPro" id="IPR011989">
    <property type="entry name" value="ARM-like"/>
</dbReference>
<dbReference type="InterPro" id="IPR016024">
    <property type="entry name" value="ARM-type_fold"/>
</dbReference>
<dbReference type="InterPro" id="IPR000225">
    <property type="entry name" value="Armadillo"/>
</dbReference>
<dbReference type="InterPro" id="IPR028435">
    <property type="entry name" value="Plakophilin/d_Catenin"/>
</dbReference>
<dbReference type="PANTHER" id="PTHR10372:SF8">
    <property type="entry name" value="PLAKOPHILIN-4"/>
    <property type="match status" value="1"/>
</dbReference>
<dbReference type="PANTHER" id="PTHR10372">
    <property type="entry name" value="PLAKOPHILLIN-RELATED"/>
    <property type="match status" value="1"/>
</dbReference>
<dbReference type="Pfam" id="PF00514">
    <property type="entry name" value="Arm"/>
    <property type="match status" value="3"/>
</dbReference>
<dbReference type="SMART" id="SM00185">
    <property type="entry name" value="ARM"/>
    <property type="match status" value="6"/>
</dbReference>
<dbReference type="SUPFAM" id="SSF48371">
    <property type="entry name" value="ARM repeat"/>
    <property type="match status" value="1"/>
</dbReference>
<dbReference type="PROSITE" id="PS50176">
    <property type="entry name" value="ARM_REPEAT"/>
    <property type="match status" value="3"/>
</dbReference>
<comment type="function">
    <text evidence="5">Plays a role as a regulator of Rho activity during cytokinesis. May play a role in junctional plaques.</text>
</comment>
<comment type="subunit">
    <text evidence="1 5 6 7">Interacts with PDZD2 (By similarity). Interacts (via the C-terminus) with FRMPD2 (via the PDZ 2 domain). Interacts with RHOA; the interaction is detected at the midbody. Interacts with ECT2; the interaction is detected at the midbody. Interacts with CCDC85B (PubMed:25009281).</text>
</comment>
<comment type="interaction">
    <interactant intactId="EBI-726447">
        <id>Q99569</id>
    </interactant>
    <interactant intactId="EBI-1166928">
        <id>Q8N5M1</id>
        <label>ATPAF2</label>
    </interactant>
    <organismsDiffer>false</organismsDiffer>
    <experiments>4</experiments>
</comment>
<comment type="interaction">
    <interactant intactId="EBI-726447">
        <id>Q99569</id>
    </interactant>
    <interactant intactId="EBI-357481">
        <id>Q12959</id>
        <label>DLG1</label>
    </interactant>
    <organismsDiffer>false</organismsDiffer>
    <experiments>3</experiments>
</comment>
<comment type="interaction">
    <interactant intactId="EBI-726447">
        <id>Q99569</id>
    </interactant>
    <interactant intactId="EBI-993903">
        <id>Q96RT1</id>
        <label>ERBIN</label>
    </interactant>
    <organismsDiffer>false</organismsDiffer>
    <experiments>4</experiments>
</comment>
<comment type="interaction">
    <interactant intactId="EBI-726447">
        <id>Q99569</id>
    </interactant>
    <interactant intactId="EBI-8449250">
        <id>Q96RT1-2</id>
        <label>ERBIN</label>
    </interactant>
    <organismsDiffer>false</organismsDiffer>
    <experiments>4</experiments>
</comment>
<comment type="interaction">
    <interactant intactId="EBI-726447">
        <id>Q99569</id>
    </interactant>
    <interactant intactId="EBI-618309">
        <id>Q08379</id>
        <label>GOLGA2</label>
    </interactant>
    <organismsDiffer>false</organismsDiffer>
    <experiments>3</experiments>
</comment>
<comment type="interaction">
    <interactant intactId="EBI-726447">
        <id>Q99569</id>
    </interactant>
    <interactant intactId="EBI-741037">
        <id>Q9BRK4</id>
        <label>LZTS2</label>
    </interactant>
    <organismsDiffer>false</organismsDiffer>
    <experiments>3</experiments>
</comment>
<comment type="interaction">
    <interactant intactId="EBI-726447">
        <id>Q99569</id>
    </interactant>
    <interactant intactId="EBI-357345">
        <id>Q14160</id>
        <label>SCRIB</label>
    </interactant>
    <organismsDiffer>false</organismsDiffer>
    <experiments>4</experiments>
</comment>
<comment type="interaction">
    <interactant intactId="EBI-726447">
        <id>Q99569</id>
    </interactant>
    <interactant intactId="EBI-740098">
        <id>P36406</id>
        <label>TRIM23</label>
    </interactant>
    <organismsDiffer>false</organismsDiffer>
    <experiments>3</experiments>
</comment>
<comment type="interaction">
    <interactant intactId="EBI-4324902">
        <id>Q99569-2</id>
    </interactant>
    <interactant intactId="EBI-1166928">
        <id>Q8N5M1</id>
        <label>ATPAF2</label>
    </interactant>
    <organismsDiffer>false</organismsDiffer>
    <experiments>3</experiments>
</comment>
<comment type="interaction">
    <interactant intactId="EBI-4324902">
        <id>Q99569-2</id>
    </interactant>
    <interactant intactId="EBI-618309">
        <id>Q08379</id>
        <label>GOLGA2</label>
    </interactant>
    <organismsDiffer>false</organismsDiffer>
    <experiments>3</experiments>
</comment>
<comment type="subcellular location">
    <subcellularLocation>
        <location evidence="5">Cell junction</location>
        <location evidence="5">Desmosome</location>
    </subcellularLocation>
    <subcellularLocation>
        <location evidence="5">Cytoplasm</location>
        <location evidence="5">Cytoskeleton</location>
        <location evidence="5">Spindle</location>
    </subcellularLocation>
    <subcellularLocation>
        <location evidence="5">Midbody</location>
    </subcellularLocation>
    <subcellularLocation>
        <location evidence="5">Cell membrane</location>
        <topology evidence="5">Peripheral membrane protein</topology>
    </subcellularLocation>
    <text>Associated with the pericentrosomal region in interphase and with spindle poles during mitosis. In anaphase, during chromosome segregation, is recruited to the central microtubule bundle, focussed at the spindle midzone and ultimately localizes to the midbody at cytokinesis. Constituent of the midbody cytoskeletal matrix. Colocalized with desmoplakin at desmosomal junctional plaques in cultured epithelial cells.</text>
</comment>
<comment type="alternative products">
    <event type="alternative splicing"/>
    <isoform>
        <id>Q99569-1</id>
        <name>1</name>
        <name>Long</name>
        <sequence type="displayed"/>
    </isoform>
    <isoform>
        <id>Q99569-2</id>
        <name>2</name>
        <name>Short</name>
        <sequence type="described" ref="VSP_006737"/>
    </isoform>
</comment>
<comment type="tissue specificity">
    <text evidence="8 9">Expressed in salivary glands (at protein level) (PubMed:30479852). Expressed in arrector pili muscle (at protein level) (PubMed:29034528).</text>
</comment>
<comment type="similarity">
    <text evidence="12">Belongs to the beta-catenin family.</text>
</comment>
<comment type="sequence caution" evidence="12">
    <conflict type="erroneous termination">
        <sequence resource="EMBL-CDS" id="CAA57478"/>
    </conflict>
    <text>Extended C-terminus.</text>
</comment>
<comment type="sequence caution" evidence="12">
    <conflict type="frameshift">
        <sequence resource="EMBL-CDS" id="CAA57478"/>
    </conflict>
</comment>
<sequence>MPAPEQASLVEEGQPQTRQEAASTGPGMEPETTATTILASVKEQELQFQRLTRELEVERQIVASQLERCRLGAESPSIASTSSTEKSFPWRSTDVPNTGVSKPRVSDAVQPNNYLIRTEPEQGTLYSPEQTSLHESEGSLGNSRSSTQMNSYSDSGYQEAGSFHNSQNVSKADNRQQHSFIGSTNNHVVRNSRAEGQTLVQPSVANRAMRRVSSVPSRAQSPSYVISTGVSPSRGSLRTSLGSGFGSPSVTDPRPLNPSAYSSTTLPAARAASPYSQRPASPTAIRRIGSVTSRQTSNPNGPTPQYQTTARVGSPLTLTDAQTRVASPSQGQVGSSSPKRSGMTAVPQHLGPSLQRTVHDMEQFGQQQYDIYERMVPPRPDSLTGLRSSYASQHSQLGQDLRSAVSPDLHITPIYEGRTYYSPVYRSPNHGTVELQGSQTALYRTGSVGIGNLQRTSSQRSTLTYQRNNYALNTTATYAEPYRPIQYRVQECNYNRLQHAVPADDGTTRSPSIDSIQKDPREFAWRDPELPEVIHMLQHQFPSVQANAAAYLQHLCFGDNKVKMEVCRLGGIKHLVDLLDHRVLEVQKNACGALRNLVFGKSTDENKIAMKNVGGIPALLRLLRKSIDAEVRELVTGVLWNLSSCDAVKMTIIRDALSTLTNTVIVPHSGWNNSSFDDDHKIKFQTSLVLRNTTGCLRNLSSAGEEARKQMRSCEGLVDSLLYVIHTCVNTSDYDSKTVENCVCTLRNLSYRLELEVPQARLLGLNELDDLLGKESPSKDSEPSCWGKKKKKKKRTPQEDQWDGVGPIPGLSKSPKGVEMLWHPSVVKPYLTLLAESSNPATLEGSAGSLQNLSAGNWKFAAYIRAAVRKEKGLPILVELLRMDNDRVVSSVATALRNMALDVRNKELIGKYAMRDLVNRLPGGNGPSVLSDETMAAICCALHEVTSKNMENAKALADSGGIEKLVNITKGRGDRSSLKVVKAAAQVLNTLWQYRDLRSIYKKDGWNQNHFITPVSTLERDRFKSHPSLSTTNQQMSPIIQSVGSTSSSPALLGIRDPRSEYDRTQPPMQYYNSQGDATHKGLYPGSSKPSPIYISSYSSPAREQNRRLQHQQLYYSQDDSNRKNFDAYRLYLQSPHSYEDPYFDDRVHFPASTDYSTQYGLKSTTNYVDFYSTKRPSYRAEQYPGSPDSWV</sequence>
<feature type="chain" id="PRO_0000064289" description="Plakophilin-4">
    <location>
        <begin position="1"/>
        <end position="1192"/>
    </location>
</feature>
<feature type="repeat" description="ARM 1">
    <location>
        <begin position="415"/>
        <end position="455"/>
    </location>
</feature>
<feature type="repeat" description="ARM 2">
    <location>
        <begin position="518"/>
        <end position="557"/>
    </location>
</feature>
<feature type="repeat" description="ARM 3">
    <location>
        <begin position="560"/>
        <end position="599"/>
    </location>
</feature>
<feature type="repeat" description="ARM 4">
    <location>
        <begin position="604"/>
        <end position="644"/>
    </location>
</feature>
<feature type="repeat" description="ARM 5">
    <location>
        <begin position="660"/>
        <end position="702"/>
    </location>
</feature>
<feature type="repeat" description="ARM 6">
    <location>
        <begin position="706"/>
        <end position="751"/>
    </location>
</feature>
<feature type="repeat" description="ARM 7">
    <location>
        <begin position="815"/>
        <end position="855"/>
    </location>
</feature>
<feature type="repeat" description="ARM 8">
    <location>
        <begin position="862"/>
        <end position="901"/>
    </location>
</feature>
<feature type="repeat" description="ARM 9">
    <location>
        <begin position="950"/>
        <end position="993"/>
    </location>
</feature>
<feature type="region of interest" description="Disordered" evidence="4">
    <location>
        <begin position="1"/>
        <end position="31"/>
    </location>
</feature>
<feature type="region of interest" description="Disordered" evidence="4">
    <location>
        <begin position="73"/>
        <end position="262"/>
    </location>
</feature>
<feature type="region of interest" description="Disordered" evidence="4">
    <location>
        <begin position="290"/>
        <end position="310"/>
    </location>
</feature>
<feature type="region of interest" description="Disordered" evidence="4">
    <location>
        <begin position="323"/>
        <end position="348"/>
    </location>
</feature>
<feature type="region of interest" description="Disordered" evidence="4">
    <location>
        <begin position="773"/>
        <end position="810"/>
    </location>
</feature>
<feature type="region of interest" description="Disordered" evidence="4">
    <location>
        <begin position="1058"/>
        <end position="1086"/>
    </location>
</feature>
<feature type="coiled-coil region" evidence="3">
    <location>
        <begin position="36"/>
        <end position="70"/>
    </location>
</feature>
<feature type="compositionally biased region" description="Polar residues" evidence="4">
    <location>
        <begin position="77"/>
        <end position="86"/>
    </location>
</feature>
<feature type="compositionally biased region" description="Polar residues" evidence="4">
    <location>
        <begin position="138"/>
        <end position="156"/>
    </location>
</feature>
<feature type="compositionally biased region" description="Polar residues" evidence="4">
    <location>
        <begin position="163"/>
        <end position="204"/>
    </location>
</feature>
<feature type="compositionally biased region" description="Polar residues" evidence="4">
    <location>
        <begin position="214"/>
        <end position="230"/>
    </location>
</feature>
<feature type="compositionally biased region" description="Low complexity" evidence="4">
    <location>
        <begin position="231"/>
        <end position="242"/>
    </location>
</feature>
<feature type="compositionally biased region" description="Low complexity" evidence="4">
    <location>
        <begin position="325"/>
        <end position="338"/>
    </location>
</feature>
<feature type="compositionally biased region" description="Basic and acidic residues" evidence="4">
    <location>
        <begin position="773"/>
        <end position="782"/>
    </location>
</feature>
<feature type="compositionally biased region" description="Polar residues" evidence="4">
    <location>
        <begin position="1067"/>
        <end position="1077"/>
    </location>
</feature>
<feature type="modified residue" description="Phosphoserine" evidence="22">
    <location>
        <position position="75"/>
    </location>
</feature>
<feature type="modified residue" description="Phosphothreonine" evidence="23">
    <location>
        <position position="84"/>
    </location>
</feature>
<feature type="modified residue" description="Phosphoserine" evidence="22">
    <location>
        <position position="106"/>
    </location>
</feature>
<feature type="modified residue" description="Phosphoserine" evidence="2">
    <location>
        <position position="132"/>
    </location>
</feature>
<feature type="modified residue" description="Phosphoserine" evidence="2">
    <location>
        <position position="136"/>
    </location>
</feature>
<feature type="modified residue" description="Phosphoserine" evidence="2">
    <location>
        <position position="139"/>
    </location>
</feature>
<feature type="modified residue" description="Phosphoserine" evidence="20 22 23">
    <location>
        <position position="221"/>
    </location>
</feature>
<feature type="modified residue" description="Phosphoserine" evidence="20 22">
    <location>
        <position position="231"/>
    </location>
</feature>
<feature type="modified residue" description="Phosphoserine" evidence="22">
    <location>
        <position position="236"/>
    </location>
</feature>
<feature type="modified residue" description="Omega-N-methylarginine" evidence="2">
    <location>
        <position position="254"/>
    </location>
</feature>
<feature type="modified residue" description="Omega-N-methylarginine" evidence="2">
    <location>
        <position position="270"/>
    </location>
</feature>
<feature type="modified residue" description="Phosphoserine" evidence="16">
    <location>
        <position position="273"/>
    </location>
</feature>
<feature type="modified residue" description="Phosphoserine" evidence="16 22">
    <location>
        <position position="281"/>
    </location>
</feature>
<feature type="modified residue" description="Phosphoserine" evidence="13 14 15 16 17 18 21 22">
    <location>
        <position position="314"/>
    </location>
</feature>
<feature type="modified residue" description="Phosphoserine" evidence="16 22">
    <location>
        <position position="327"/>
    </location>
</feature>
<feature type="modified residue" description="Phosphoserine" evidence="22 23">
    <location>
        <position position="337"/>
    </location>
</feature>
<feature type="modified residue" description="Phosphotyrosine" evidence="2">
    <location>
        <position position="372"/>
    </location>
</feature>
<feature type="modified residue" description="Phosphoserine" evidence="22 23">
    <location>
        <position position="392"/>
    </location>
</feature>
<feature type="modified residue" description="Phosphoserine" evidence="15">
    <location>
        <position position="403"/>
    </location>
</feature>
<feature type="modified residue" description="Phosphoserine" evidence="13 15 22">
    <location>
        <position position="406"/>
    </location>
</feature>
<feature type="modified residue" description="Phosphothreonine" evidence="2">
    <location>
        <position position="412"/>
    </location>
</feature>
<feature type="modified residue" description="Phosphotyrosine" evidence="13 19">
    <location>
        <position position="415"/>
    </location>
</feature>
<feature type="modified residue" description="Phosphoserine" evidence="2">
    <location>
        <position position="422"/>
    </location>
</feature>
<feature type="modified residue" description="Phosphoserine" evidence="2">
    <location>
        <position position="427"/>
    </location>
</feature>
<feature type="modified residue" description="Phosphoserine" evidence="2">
    <location>
        <position position="438"/>
    </location>
</feature>
<feature type="modified residue" description="Phosphotyrosine" evidence="2">
    <location>
        <position position="478"/>
    </location>
</feature>
<feature type="modified residue" description="Phosphoserine" evidence="2">
    <location>
        <position position="510"/>
    </location>
</feature>
<feature type="modified residue" description="Phosphoserine" evidence="2">
    <location>
        <position position="512"/>
    </location>
</feature>
<feature type="modified residue" description="Phosphoserine" evidence="2">
    <location>
        <position position="515"/>
    </location>
</feature>
<feature type="modified residue" description="Phosphoserine" evidence="20 22 23">
    <location>
        <position position="776"/>
    </location>
</feature>
<feature type="modified residue" description="Phosphothreonine" evidence="2">
    <location>
        <position position="1013"/>
    </location>
</feature>
<feature type="modified residue" description="Phosphothreonine" evidence="2">
    <location>
        <position position="1017"/>
    </location>
</feature>
<feature type="modified residue" description="Phosphoserine" evidence="2">
    <location>
        <position position="1045"/>
    </location>
</feature>
<feature type="modified residue" description="Phosphoserine" evidence="2">
    <location>
        <position position="1091"/>
    </location>
</feature>
<feature type="modified residue" description="Phosphoserine" evidence="2">
    <location>
        <position position="1100"/>
    </location>
</feature>
<feature type="modified residue" description="Phosphoserine" evidence="2">
    <location>
        <position position="1135"/>
    </location>
</feature>
<feature type="splice variant" id="VSP_006737" description="In isoform 2." evidence="10 11">
    <location>
        <begin position="1043"/>
        <end position="1085"/>
    </location>
</feature>
<feature type="sequence conflict" description="In Ref. 3; AAH50308." evidence="12" ref="3">
    <original>V</original>
    <variation>M</variation>
    <location>
        <position position="41"/>
    </location>
</feature>
<feature type="sequence conflict" description="In Ref. 3; AAH50308." evidence="12" ref="3">
    <original>S</original>
    <variation>Y</variation>
    <location>
        <position position="223"/>
    </location>
</feature>
<feature type="sequence conflict" description="In Ref. 3; AAH50308." evidence="12" ref="3">
    <original>G</original>
    <variation>W</variation>
    <location>
        <position position="235"/>
    </location>
</feature>
<feature type="sequence conflict" description="In Ref. 1; CAA57478." evidence="12" ref="1">
    <original>S</original>
    <variation>V</variation>
    <location>
        <position position="335"/>
    </location>
</feature>
<feature type="sequence conflict" description="In Ref. 1; CAA57478." evidence="12" ref="1">
    <original>S</original>
    <variation>V</variation>
    <location>
        <position position="336"/>
    </location>
</feature>
<feature type="sequence conflict" description="In Ref. 1; CAA57478." evidence="12" ref="1">
    <original>S</original>
    <variation>V</variation>
    <location>
        <position position="447"/>
    </location>
</feature>
<feature type="sequence conflict" description="In Ref. 1; CAA57478." evidence="12" ref="1">
    <original>V</original>
    <variation>S</variation>
    <location>
        <position position="448"/>
    </location>
</feature>
<feature type="sequence conflict" description="In Ref. 1; CAA57478." evidence="12" ref="1">
    <original>Q</original>
    <variation>E</variation>
    <location>
        <position position="538"/>
    </location>
</feature>
<feature type="sequence conflict" description="In Ref. 1; CAA57478." evidence="12" ref="1">
    <original>S</original>
    <variation>T</variation>
    <location>
        <position position="701"/>
    </location>
</feature>
<feature type="sequence conflict" description="In Ref. 3; AAH50308." evidence="12" ref="3">
    <original>N</original>
    <variation>D</variation>
    <location>
        <position position="766"/>
    </location>
</feature>
<feature type="sequence conflict" description="In Ref. 1; CAA57478." evidence="12" ref="1">
    <original>G</original>
    <variation>S</variation>
    <location>
        <position position="856"/>
    </location>
</feature>
<feature type="sequence conflict" description="In Ref. 1; CAA57478." evidence="12" ref="1">
    <original>R</original>
    <variation>G</variation>
    <location>
        <position position="865"/>
    </location>
</feature>
<feature type="sequence conflict" description="In Ref. 1; CAA57478." evidence="12" ref="1">
    <original>V</original>
    <variation>G</variation>
    <location>
        <position position="892"/>
    </location>
</feature>
<accession>Q99569</accession>
<accession>Q86W91</accession>
<evidence type="ECO:0000250" key="1"/>
<evidence type="ECO:0000250" key="2">
    <source>
        <dbReference type="UniProtKB" id="Q68FH0"/>
    </source>
</evidence>
<evidence type="ECO:0000255" key="3"/>
<evidence type="ECO:0000256" key="4">
    <source>
        <dbReference type="SAM" id="MobiDB-lite"/>
    </source>
</evidence>
<evidence type="ECO:0000269" key="5">
    <source>
    </source>
</evidence>
<evidence type="ECO:0000269" key="6">
    <source>
    </source>
</evidence>
<evidence type="ECO:0000269" key="7">
    <source>
    </source>
</evidence>
<evidence type="ECO:0000269" key="8">
    <source>
    </source>
</evidence>
<evidence type="ECO:0000269" key="9">
    <source>
    </source>
</evidence>
<evidence type="ECO:0000303" key="10">
    <source>
    </source>
</evidence>
<evidence type="ECO:0000303" key="11">
    <source>
    </source>
</evidence>
<evidence type="ECO:0000305" key="12"/>
<evidence type="ECO:0007744" key="13">
    <source>
    </source>
</evidence>
<evidence type="ECO:0007744" key="14">
    <source>
    </source>
</evidence>
<evidence type="ECO:0007744" key="15">
    <source>
    </source>
</evidence>
<evidence type="ECO:0007744" key="16">
    <source>
    </source>
</evidence>
<evidence type="ECO:0007744" key="17">
    <source>
    </source>
</evidence>
<evidence type="ECO:0007744" key="18">
    <source>
    </source>
</evidence>
<evidence type="ECO:0007744" key="19">
    <source>
    </source>
</evidence>
<evidence type="ECO:0007744" key="20">
    <source>
    </source>
</evidence>
<evidence type="ECO:0007744" key="21">
    <source>
    </source>
</evidence>
<evidence type="ECO:0007744" key="22">
    <source>
    </source>
</evidence>
<evidence type="ECO:0007744" key="23">
    <source>
    </source>
</evidence>
<organism>
    <name type="scientific">Homo sapiens</name>
    <name type="common">Human</name>
    <dbReference type="NCBI Taxonomy" id="9606"/>
    <lineage>
        <taxon>Eukaryota</taxon>
        <taxon>Metazoa</taxon>
        <taxon>Chordata</taxon>
        <taxon>Craniata</taxon>
        <taxon>Vertebrata</taxon>
        <taxon>Euteleostomi</taxon>
        <taxon>Mammalia</taxon>
        <taxon>Eutheria</taxon>
        <taxon>Euarchontoglires</taxon>
        <taxon>Primates</taxon>
        <taxon>Haplorrhini</taxon>
        <taxon>Catarrhini</taxon>
        <taxon>Hominidae</taxon>
        <taxon>Homo</taxon>
    </lineage>
</organism>
<gene>
    <name type="primary">PKP4</name>
</gene>
<reference key="1">
    <citation type="journal article" date="1996" name="J. Cell Sci.">
        <title>Cloning and characterization of a new armadillo family member, p0071, associated with the junctional plaque: evidence for a subfamily of closely related proteins.</title>
        <authorList>
            <person name="Hatzfeld M."/>
            <person name="Nachtsheim C."/>
        </authorList>
    </citation>
    <scope>NUCLEOTIDE SEQUENCE [MRNA] (ISOFORMS 1 AND 2)</scope>
    <source>
        <tissue>Frontal cortex</tissue>
    </source>
</reference>
<reference key="2">
    <citation type="journal article" date="2005" name="Nature">
        <title>Generation and annotation of the DNA sequences of human chromosomes 2 and 4.</title>
        <authorList>
            <person name="Hillier L.W."/>
            <person name="Graves T.A."/>
            <person name="Fulton R.S."/>
            <person name="Fulton L.A."/>
            <person name="Pepin K.H."/>
            <person name="Minx P."/>
            <person name="Wagner-McPherson C."/>
            <person name="Layman D."/>
            <person name="Wylie K."/>
            <person name="Sekhon M."/>
            <person name="Becker M.C."/>
            <person name="Fewell G.A."/>
            <person name="Delehaunty K.D."/>
            <person name="Miner T.L."/>
            <person name="Nash W.E."/>
            <person name="Kremitzki C."/>
            <person name="Oddy L."/>
            <person name="Du H."/>
            <person name="Sun H."/>
            <person name="Bradshaw-Cordum H."/>
            <person name="Ali J."/>
            <person name="Carter J."/>
            <person name="Cordes M."/>
            <person name="Harris A."/>
            <person name="Isak A."/>
            <person name="van Brunt A."/>
            <person name="Nguyen C."/>
            <person name="Du F."/>
            <person name="Courtney L."/>
            <person name="Kalicki J."/>
            <person name="Ozersky P."/>
            <person name="Abbott S."/>
            <person name="Armstrong J."/>
            <person name="Belter E.A."/>
            <person name="Caruso L."/>
            <person name="Cedroni M."/>
            <person name="Cotton M."/>
            <person name="Davidson T."/>
            <person name="Desai A."/>
            <person name="Elliott G."/>
            <person name="Erb T."/>
            <person name="Fronick C."/>
            <person name="Gaige T."/>
            <person name="Haakenson W."/>
            <person name="Haglund K."/>
            <person name="Holmes A."/>
            <person name="Harkins R."/>
            <person name="Kim K."/>
            <person name="Kruchowski S.S."/>
            <person name="Strong C.M."/>
            <person name="Grewal N."/>
            <person name="Goyea E."/>
            <person name="Hou S."/>
            <person name="Levy A."/>
            <person name="Martinka S."/>
            <person name="Mead K."/>
            <person name="McLellan M.D."/>
            <person name="Meyer R."/>
            <person name="Randall-Maher J."/>
            <person name="Tomlinson C."/>
            <person name="Dauphin-Kohlberg S."/>
            <person name="Kozlowicz-Reilly A."/>
            <person name="Shah N."/>
            <person name="Swearengen-Shahid S."/>
            <person name="Snider J."/>
            <person name="Strong J.T."/>
            <person name="Thompson J."/>
            <person name="Yoakum M."/>
            <person name="Leonard S."/>
            <person name="Pearman C."/>
            <person name="Trani L."/>
            <person name="Radionenko M."/>
            <person name="Waligorski J.E."/>
            <person name="Wang C."/>
            <person name="Rock S.M."/>
            <person name="Tin-Wollam A.-M."/>
            <person name="Maupin R."/>
            <person name="Latreille P."/>
            <person name="Wendl M.C."/>
            <person name="Yang S.-P."/>
            <person name="Pohl C."/>
            <person name="Wallis J.W."/>
            <person name="Spieth J."/>
            <person name="Bieri T.A."/>
            <person name="Berkowicz N."/>
            <person name="Nelson J.O."/>
            <person name="Osborne J."/>
            <person name="Ding L."/>
            <person name="Meyer R."/>
            <person name="Sabo A."/>
            <person name="Shotland Y."/>
            <person name="Sinha P."/>
            <person name="Wohldmann P.E."/>
            <person name="Cook L.L."/>
            <person name="Hickenbotham M.T."/>
            <person name="Eldred J."/>
            <person name="Williams D."/>
            <person name="Jones T.A."/>
            <person name="She X."/>
            <person name="Ciccarelli F.D."/>
            <person name="Izaurralde E."/>
            <person name="Taylor J."/>
            <person name="Schmutz J."/>
            <person name="Myers R.M."/>
            <person name="Cox D.R."/>
            <person name="Huang X."/>
            <person name="McPherson J.D."/>
            <person name="Mardis E.R."/>
            <person name="Clifton S.W."/>
            <person name="Warren W.C."/>
            <person name="Chinwalla A.T."/>
            <person name="Eddy S.R."/>
            <person name="Marra M.A."/>
            <person name="Ovcharenko I."/>
            <person name="Furey T.S."/>
            <person name="Miller W."/>
            <person name="Eichler E.E."/>
            <person name="Bork P."/>
            <person name="Suyama M."/>
            <person name="Torrents D."/>
            <person name="Waterston R.H."/>
            <person name="Wilson R.K."/>
        </authorList>
    </citation>
    <scope>NUCLEOTIDE SEQUENCE [LARGE SCALE GENOMIC DNA]</scope>
</reference>
<reference key="3">
    <citation type="journal article" date="2004" name="Genome Res.">
        <title>The status, quality, and expansion of the NIH full-length cDNA project: the Mammalian Gene Collection (MGC).</title>
        <authorList>
            <consortium name="The MGC Project Team"/>
        </authorList>
    </citation>
    <scope>NUCLEOTIDE SEQUENCE [LARGE SCALE MRNA] (ISOFORM 2)</scope>
    <source>
        <tissue>Brain</tissue>
    </source>
</reference>
<reference key="4">
    <citation type="journal article" date="2004" name="Anal. Chem.">
        <title>Robust phosphoproteomic profiling of tyrosine phosphorylation sites from human T cells using immobilized metal affinity chromatography and tandem mass spectrometry.</title>
        <authorList>
            <person name="Brill L.M."/>
            <person name="Salomon A.R."/>
            <person name="Ficarro S.B."/>
            <person name="Mukherji M."/>
            <person name="Stettler-Gill M."/>
            <person name="Peters E.C."/>
        </authorList>
    </citation>
    <scope>PHOSPHORYLATION [LARGE SCALE ANALYSIS] AT SER-314; SER-406 AND TYR-415</scope>
    <scope>IDENTIFICATION BY MASS SPECTROMETRY [LARGE SCALE ANALYSIS]</scope>
    <source>
        <tissue>Leukemic T-cell</tissue>
    </source>
</reference>
<reference key="5">
    <citation type="journal article" date="2006" name="Cell">
        <title>Global, in vivo, and site-specific phosphorylation dynamics in signaling networks.</title>
        <authorList>
            <person name="Olsen J.V."/>
            <person name="Blagoev B."/>
            <person name="Gnad F."/>
            <person name="Macek B."/>
            <person name="Kumar C."/>
            <person name="Mortensen P."/>
            <person name="Mann M."/>
        </authorList>
    </citation>
    <scope>PHOSPHORYLATION [LARGE SCALE ANALYSIS] AT SER-314</scope>
    <scope>IDENTIFICATION BY MASS SPECTROMETRY [LARGE SCALE ANALYSIS]</scope>
    <source>
        <tissue>Cervix carcinoma</tissue>
    </source>
</reference>
<reference key="6">
    <citation type="journal article" date="2006" name="Nat. Cell Biol.">
        <title>The armadillo protein p0071 regulates Rho signalling during cytokinesis.</title>
        <authorList>
            <person name="Wolf A."/>
            <person name="Keil R."/>
            <person name="Gotzl O."/>
            <person name="Mun A."/>
            <person name="Schwarze K."/>
            <person name="Lederer M."/>
            <person name="Huttelmaier S."/>
            <person name="Hatzfeld M."/>
        </authorList>
    </citation>
    <scope>FUNCTION</scope>
    <scope>INTERACTION WITH ECT2 AND RHOA</scope>
    <scope>SUBCELLULAR LOCATION</scope>
</reference>
<reference key="7">
    <citation type="journal article" date="2008" name="J. Proteome Res.">
        <title>Combining protein-based IMAC, peptide-based IMAC, and MudPIT for efficient phosphoproteomic analysis.</title>
        <authorList>
            <person name="Cantin G.T."/>
            <person name="Yi W."/>
            <person name="Lu B."/>
            <person name="Park S.K."/>
            <person name="Xu T."/>
            <person name="Lee J.-D."/>
            <person name="Yates J.R. III"/>
        </authorList>
    </citation>
    <scope>PHOSPHORYLATION [LARGE SCALE ANALYSIS] AT SER-314; SER-403 AND SER-406</scope>
    <scope>IDENTIFICATION BY MASS SPECTROMETRY [LARGE SCALE ANALYSIS]</scope>
    <source>
        <tissue>Cervix carcinoma</tissue>
    </source>
</reference>
<reference key="8">
    <citation type="journal article" date="2008" name="Mol. Cell">
        <title>Kinase-selective enrichment enables quantitative phosphoproteomics of the kinome across the cell cycle.</title>
        <authorList>
            <person name="Daub H."/>
            <person name="Olsen J.V."/>
            <person name="Bairlein M."/>
            <person name="Gnad F."/>
            <person name="Oppermann F.S."/>
            <person name="Korner R."/>
            <person name="Greff Z."/>
            <person name="Keri G."/>
            <person name="Stemmann O."/>
            <person name="Mann M."/>
        </authorList>
    </citation>
    <scope>PHOSPHORYLATION [LARGE SCALE ANALYSIS] AT SER-314</scope>
    <scope>IDENTIFICATION BY MASS SPECTROMETRY [LARGE SCALE ANALYSIS]</scope>
    <source>
        <tissue>Cervix carcinoma</tissue>
    </source>
</reference>
<reference key="9">
    <citation type="journal article" date="2008" name="Proc. Natl. Acad. Sci. U.S.A.">
        <title>A quantitative atlas of mitotic phosphorylation.</title>
        <authorList>
            <person name="Dephoure N."/>
            <person name="Zhou C."/>
            <person name="Villen J."/>
            <person name="Beausoleil S.A."/>
            <person name="Bakalarski C.E."/>
            <person name="Elledge S.J."/>
            <person name="Gygi S.P."/>
        </authorList>
    </citation>
    <scope>PHOSPHORYLATION [LARGE SCALE ANALYSIS] AT SER-273; SER-281; SER-314 AND SER-327</scope>
    <scope>IDENTIFICATION BY MASS SPECTROMETRY [LARGE SCALE ANALYSIS]</scope>
    <source>
        <tissue>Cervix carcinoma</tissue>
    </source>
</reference>
<reference key="10">
    <citation type="journal article" date="2009" name="Anal. Chem.">
        <title>Lys-N and trypsin cover complementary parts of the phosphoproteome in a refined SCX-based approach.</title>
        <authorList>
            <person name="Gauci S."/>
            <person name="Helbig A.O."/>
            <person name="Slijper M."/>
            <person name="Krijgsveld J."/>
            <person name="Heck A.J."/>
            <person name="Mohammed S."/>
        </authorList>
    </citation>
    <scope>IDENTIFICATION BY MASS SPECTROMETRY [LARGE SCALE ANALYSIS]</scope>
</reference>
<reference key="11">
    <citation type="journal article" date="2009" name="J. Cell Sci.">
        <title>PDZ-domain-directed basolateral targeting of the peripheral membrane protein FRMPD2 in epithelial cells.</title>
        <authorList>
            <person name="Stenzel N."/>
            <person name="Fetzer C.P."/>
            <person name="Heumann R."/>
            <person name="Erdmann K.S."/>
        </authorList>
    </citation>
    <scope>INTERACTION WITH FRMPD2</scope>
</reference>
<reference key="12">
    <citation type="journal article" date="2009" name="Mol. Cell. Proteomics">
        <title>Large-scale proteomics analysis of the human kinome.</title>
        <authorList>
            <person name="Oppermann F.S."/>
            <person name="Gnad F."/>
            <person name="Olsen J.V."/>
            <person name="Hornberger R."/>
            <person name="Greff Z."/>
            <person name="Keri G."/>
            <person name="Mann M."/>
            <person name="Daub H."/>
        </authorList>
    </citation>
    <scope>PHOSPHORYLATION [LARGE SCALE ANALYSIS] AT SER-314</scope>
    <scope>IDENTIFICATION BY MASS SPECTROMETRY [LARGE SCALE ANALYSIS]</scope>
</reference>
<reference key="13">
    <citation type="journal article" date="2009" name="Sci. Signal.">
        <title>Quantitative phosphoproteomic analysis of T cell receptor signaling reveals system-wide modulation of protein-protein interactions.</title>
        <authorList>
            <person name="Mayya V."/>
            <person name="Lundgren D.H."/>
            <person name="Hwang S.-I."/>
            <person name="Rezaul K."/>
            <person name="Wu L."/>
            <person name="Eng J.K."/>
            <person name="Rodionov V."/>
            <person name="Han D.K."/>
        </authorList>
    </citation>
    <scope>PHOSPHORYLATION [LARGE SCALE ANALYSIS] AT TYR-415</scope>
    <scope>IDENTIFICATION BY MASS SPECTROMETRY [LARGE SCALE ANALYSIS]</scope>
    <source>
        <tissue>Leukemic T-cell</tissue>
    </source>
</reference>
<reference key="14">
    <citation type="journal article" date="2010" name="Sci. Signal.">
        <title>Quantitative phosphoproteomics reveals widespread full phosphorylation site occupancy during mitosis.</title>
        <authorList>
            <person name="Olsen J.V."/>
            <person name="Vermeulen M."/>
            <person name="Santamaria A."/>
            <person name="Kumar C."/>
            <person name="Miller M.L."/>
            <person name="Jensen L.J."/>
            <person name="Gnad F."/>
            <person name="Cox J."/>
            <person name="Jensen T.S."/>
            <person name="Nigg E.A."/>
            <person name="Brunak S."/>
            <person name="Mann M."/>
        </authorList>
    </citation>
    <scope>PHOSPHORYLATION [LARGE SCALE ANALYSIS] AT SER-221; SER-231 AND SER-776</scope>
    <scope>IDENTIFICATION BY MASS SPECTROMETRY [LARGE SCALE ANALYSIS]</scope>
    <source>
        <tissue>Cervix carcinoma</tissue>
    </source>
</reference>
<reference key="15">
    <citation type="journal article" date="2011" name="Sci. Signal.">
        <title>System-wide temporal characterization of the proteome and phosphoproteome of human embryonic stem cell differentiation.</title>
        <authorList>
            <person name="Rigbolt K.T."/>
            <person name="Prokhorova T.A."/>
            <person name="Akimov V."/>
            <person name="Henningsen J."/>
            <person name="Johansen P.T."/>
            <person name="Kratchmarova I."/>
            <person name="Kassem M."/>
            <person name="Mann M."/>
            <person name="Olsen J.V."/>
            <person name="Blagoev B."/>
        </authorList>
    </citation>
    <scope>PHOSPHORYLATION [LARGE SCALE ANALYSIS] AT SER-314</scope>
    <scope>IDENTIFICATION BY MASS SPECTROMETRY [LARGE SCALE ANALYSIS]</scope>
</reference>
<reference key="16">
    <citation type="journal article" date="2012" name="Proc. Natl. Acad. Sci. U.S.A.">
        <title>N-terminal acetylome analyses and functional insights of the N-terminal acetyltransferase NatB.</title>
        <authorList>
            <person name="Van Damme P."/>
            <person name="Lasa M."/>
            <person name="Polevoda B."/>
            <person name="Gazquez C."/>
            <person name="Elosegui-Artola A."/>
            <person name="Kim D.S."/>
            <person name="De Juan-Pardo E."/>
            <person name="Demeyer K."/>
            <person name="Hole K."/>
            <person name="Larrea E."/>
            <person name="Timmerman E."/>
            <person name="Prieto J."/>
            <person name="Arnesen T."/>
            <person name="Sherman F."/>
            <person name="Gevaert K."/>
            <person name="Aldabe R."/>
        </authorList>
    </citation>
    <scope>IDENTIFICATION BY MASS SPECTROMETRY [LARGE SCALE ANALYSIS]</scope>
</reference>
<reference key="17">
    <citation type="journal article" date="2013" name="J. Proteome Res.">
        <title>Toward a comprehensive characterization of a human cancer cell phosphoproteome.</title>
        <authorList>
            <person name="Zhou H."/>
            <person name="Di Palma S."/>
            <person name="Preisinger C."/>
            <person name="Peng M."/>
            <person name="Polat A.N."/>
            <person name="Heck A.J."/>
            <person name="Mohammed S."/>
        </authorList>
    </citation>
    <scope>PHOSPHORYLATION [LARGE SCALE ANALYSIS] AT SER-75; SER-106; SER-221; SER-231; SER-236; SER-281; SER-314; SER-327; SER-337; SER-392; SER-406 AND SER-776</scope>
    <scope>IDENTIFICATION BY MASS SPECTROMETRY [LARGE SCALE ANALYSIS]</scope>
    <source>
        <tissue>Cervix carcinoma</tissue>
        <tissue>Erythroleukemia</tissue>
    </source>
</reference>
<reference key="18">
    <citation type="journal article" date="2014" name="J. Proteomics">
        <title>An enzyme assisted RP-RPLC approach for in-depth analysis of human liver phosphoproteome.</title>
        <authorList>
            <person name="Bian Y."/>
            <person name="Song C."/>
            <person name="Cheng K."/>
            <person name="Dong M."/>
            <person name="Wang F."/>
            <person name="Huang J."/>
            <person name="Sun D."/>
            <person name="Wang L."/>
            <person name="Ye M."/>
            <person name="Zou H."/>
        </authorList>
    </citation>
    <scope>PHOSPHORYLATION [LARGE SCALE ANALYSIS] AT THR-84; SER-221; SER-337; SER-392 AND SER-776</scope>
    <scope>IDENTIFICATION BY MASS SPECTROMETRY [LARGE SCALE ANALYSIS]</scope>
    <source>
        <tissue>Liver</tissue>
    </source>
</reference>
<reference key="19">
    <citation type="journal article" date="2014" name="Mol. Biol. Cell">
        <title>DIPA-family coiled-coils bind conserved isoform-specific head domain of p120-catenin family: potential roles in hydrocephalus and heterotopia.</title>
        <authorList>
            <person name="Markham N.O."/>
            <person name="Doll C.A."/>
            <person name="Dohn M.R."/>
            <person name="Miller R.K."/>
            <person name="Yu H."/>
            <person name="Coffey R.J."/>
            <person name="McCrea P.D."/>
            <person name="Gamse J.T."/>
            <person name="Reynolds A.B."/>
        </authorList>
    </citation>
    <scope>INTERACTION WITH CCDC85B</scope>
</reference>
<reference key="20">
    <citation type="journal article" date="2017" name="Clin. Exp. Dermatol.">
        <title>Patients with a new variant of endemic pemphigus foliaceus have autoantibodies against arrector pili muscle, colocalizing with MYZAP, p0071, desmoplakins 1 and 2 and ARVCF.</title>
        <authorList>
            <person name="Abreu-Velez A.M."/>
            <person name="Valencia-Yepes C.A."/>
            <person name="Upegui-Zapata Y.A."/>
            <person name="Upegui-Quiceno E."/>
            <person name="Mesa-Herrera N.R."/>
            <person name="Velazquez-Velez J.E."/>
            <person name="Howard M.S."/>
        </authorList>
    </citation>
    <scope>TISSUE SPECIFICITY</scope>
</reference>
<reference key="21">
    <citation type="journal article" date="2018" name="Dermatol. Pract. Concept.">
        <title>Subclinical oral involvement in patients with endemic pemphigus foliaceus.</title>
        <authorList>
            <person name="Abreu-Velez A.M."/>
            <person name="Howard M.S."/>
            <person name="Padilla H.J.L."/>
            <person name="Tobon-Arroyave S."/>
        </authorList>
    </citation>
    <scope>TISSUE SPECIFICITY</scope>
</reference>
<protein>
    <recommendedName>
        <fullName>Plakophilin-4</fullName>
    </recommendedName>
    <alternativeName>
        <fullName>p0071</fullName>
    </alternativeName>
</protein>
<keyword id="KW-0025">Alternative splicing</keyword>
<keyword id="KW-0130">Cell adhesion</keyword>
<keyword id="KW-0965">Cell junction</keyword>
<keyword id="KW-1003">Cell membrane</keyword>
<keyword id="KW-0175">Coiled coil</keyword>
<keyword id="KW-0963">Cytoplasm</keyword>
<keyword id="KW-0206">Cytoskeleton</keyword>
<keyword id="KW-0472">Membrane</keyword>
<keyword id="KW-0488">Methylation</keyword>
<keyword id="KW-0597">Phosphoprotein</keyword>
<keyword id="KW-1267">Proteomics identification</keyword>
<keyword id="KW-1185">Reference proteome</keyword>
<keyword id="KW-0677">Repeat</keyword>
<name>PKP4_HUMAN</name>